<name>MURB_RICBR</name>
<keyword id="KW-0131">Cell cycle</keyword>
<keyword id="KW-0132">Cell division</keyword>
<keyword id="KW-0133">Cell shape</keyword>
<keyword id="KW-0961">Cell wall biogenesis/degradation</keyword>
<keyword id="KW-0963">Cytoplasm</keyword>
<keyword id="KW-0274">FAD</keyword>
<keyword id="KW-0285">Flavoprotein</keyword>
<keyword id="KW-0521">NADP</keyword>
<keyword id="KW-0560">Oxidoreductase</keyword>
<keyword id="KW-0573">Peptidoglycan synthesis</keyword>
<comment type="function">
    <text evidence="1">Cell wall formation.</text>
</comment>
<comment type="catalytic activity">
    <reaction evidence="1">
        <text>UDP-N-acetyl-alpha-D-muramate + NADP(+) = UDP-N-acetyl-3-O-(1-carboxyvinyl)-alpha-D-glucosamine + NADPH + H(+)</text>
        <dbReference type="Rhea" id="RHEA:12248"/>
        <dbReference type="ChEBI" id="CHEBI:15378"/>
        <dbReference type="ChEBI" id="CHEBI:57783"/>
        <dbReference type="ChEBI" id="CHEBI:58349"/>
        <dbReference type="ChEBI" id="CHEBI:68483"/>
        <dbReference type="ChEBI" id="CHEBI:70757"/>
        <dbReference type="EC" id="1.3.1.98"/>
    </reaction>
</comment>
<comment type="cofactor">
    <cofactor evidence="1">
        <name>FAD</name>
        <dbReference type="ChEBI" id="CHEBI:57692"/>
    </cofactor>
</comment>
<comment type="pathway">
    <text evidence="1">Cell wall biogenesis; peptidoglycan biosynthesis.</text>
</comment>
<comment type="subcellular location">
    <subcellularLocation>
        <location evidence="1">Cytoplasm</location>
    </subcellularLocation>
</comment>
<comment type="similarity">
    <text evidence="1">Belongs to the MurB family.</text>
</comment>
<organism>
    <name type="scientific">Rickettsia bellii (strain RML369-C)</name>
    <dbReference type="NCBI Taxonomy" id="336407"/>
    <lineage>
        <taxon>Bacteria</taxon>
        <taxon>Pseudomonadati</taxon>
        <taxon>Pseudomonadota</taxon>
        <taxon>Alphaproteobacteria</taxon>
        <taxon>Rickettsiales</taxon>
        <taxon>Rickettsiaceae</taxon>
        <taxon>Rickettsieae</taxon>
        <taxon>Rickettsia</taxon>
        <taxon>belli group</taxon>
    </lineage>
</organism>
<feature type="chain" id="PRO_0000278067" description="UDP-N-acetylenolpyruvoylglucosamine reductase">
    <location>
        <begin position="1"/>
        <end position="302"/>
    </location>
</feature>
<feature type="domain" description="FAD-binding PCMH-type" evidence="1">
    <location>
        <begin position="23"/>
        <end position="188"/>
    </location>
</feature>
<feature type="active site" evidence="1">
    <location>
        <position position="168"/>
    </location>
</feature>
<feature type="active site" description="Proton donor" evidence="1">
    <location>
        <position position="217"/>
    </location>
</feature>
<feature type="active site" evidence="1">
    <location>
        <position position="287"/>
    </location>
</feature>
<sequence length="302" mass="33111">MNLPIVKGEYRKDYNLKHLTWFKVGGNAEIFFKPVDSEDLASFLVQNKQKLPITTFGAGSNIIIRDGGIEGVTIKLGQNFSNIDFTDDGHLIVGSSCLNFSLAKFCQVNAISGFEFLVGIPGTIGGGVAMNAGAYGCEFKDILVRIEAIDFAGNFRTFTNEEIGFKYRGNNLPKDLIILKAVFKVNKGNSEDILARMNEINAARSSTQPIKERTGGSTFANPEGFKSWQLIDKAGLRGYRIGDASISELHCNFMINNGNATAKELEDLGNFVQQKVFEDSGIKLNWEIKRIGKVSSRGLTTG</sequence>
<protein>
    <recommendedName>
        <fullName evidence="1">UDP-N-acetylenolpyruvoylglucosamine reductase</fullName>
        <ecNumber evidence="1">1.3.1.98</ecNumber>
    </recommendedName>
    <alternativeName>
        <fullName evidence="1">UDP-N-acetylmuramate dehydrogenase</fullName>
    </alternativeName>
</protein>
<gene>
    <name evidence="1" type="primary">murB</name>
    <name type="ordered locus">RBE_0962</name>
</gene>
<proteinExistence type="inferred from homology"/>
<reference key="1">
    <citation type="journal article" date="2006" name="PLoS Genet.">
        <title>Genome sequence of Rickettsia bellii illuminates the role of amoebae in gene exchanges between intracellular pathogens.</title>
        <authorList>
            <person name="Ogata H."/>
            <person name="La Scola B."/>
            <person name="Audic S."/>
            <person name="Renesto P."/>
            <person name="Blanc G."/>
            <person name="Robert C."/>
            <person name="Fournier P.-E."/>
            <person name="Claverie J.-M."/>
            <person name="Raoult D."/>
        </authorList>
    </citation>
    <scope>NUCLEOTIDE SEQUENCE [LARGE SCALE GENOMIC DNA]</scope>
    <source>
        <strain>RML369-C</strain>
    </source>
</reference>
<evidence type="ECO:0000255" key="1">
    <source>
        <dbReference type="HAMAP-Rule" id="MF_00037"/>
    </source>
</evidence>
<dbReference type="EC" id="1.3.1.98" evidence="1"/>
<dbReference type="EMBL" id="CP000087">
    <property type="protein sequence ID" value="ABE05043.1"/>
    <property type="molecule type" value="Genomic_DNA"/>
</dbReference>
<dbReference type="RefSeq" id="WP_011477623.1">
    <property type="nucleotide sequence ID" value="NC_007940.1"/>
</dbReference>
<dbReference type="SMR" id="Q1RHX1"/>
<dbReference type="KEGG" id="rbe:RBE_0962"/>
<dbReference type="eggNOG" id="COG0812">
    <property type="taxonomic scope" value="Bacteria"/>
</dbReference>
<dbReference type="HOGENOM" id="CLU_035304_1_0_5"/>
<dbReference type="OrthoDB" id="9804753at2"/>
<dbReference type="UniPathway" id="UPA00219"/>
<dbReference type="Proteomes" id="UP000001951">
    <property type="component" value="Chromosome"/>
</dbReference>
<dbReference type="GO" id="GO:0005829">
    <property type="term" value="C:cytosol"/>
    <property type="evidence" value="ECO:0007669"/>
    <property type="project" value="TreeGrafter"/>
</dbReference>
<dbReference type="GO" id="GO:0071949">
    <property type="term" value="F:FAD binding"/>
    <property type="evidence" value="ECO:0007669"/>
    <property type="project" value="InterPro"/>
</dbReference>
<dbReference type="GO" id="GO:0008762">
    <property type="term" value="F:UDP-N-acetylmuramate dehydrogenase activity"/>
    <property type="evidence" value="ECO:0007669"/>
    <property type="project" value="UniProtKB-UniRule"/>
</dbReference>
<dbReference type="GO" id="GO:0051301">
    <property type="term" value="P:cell division"/>
    <property type="evidence" value="ECO:0007669"/>
    <property type="project" value="UniProtKB-KW"/>
</dbReference>
<dbReference type="GO" id="GO:0071555">
    <property type="term" value="P:cell wall organization"/>
    <property type="evidence" value="ECO:0007669"/>
    <property type="project" value="UniProtKB-KW"/>
</dbReference>
<dbReference type="GO" id="GO:0009252">
    <property type="term" value="P:peptidoglycan biosynthetic process"/>
    <property type="evidence" value="ECO:0007669"/>
    <property type="project" value="UniProtKB-UniRule"/>
</dbReference>
<dbReference type="GO" id="GO:0008360">
    <property type="term" value="P:regulation of cell shape"/>
    <property type="evidence" value="ECO:0007669"/>
    <property type="project" value="UniProtKB-KW"/>
</dbReference>
<dbReference type="Gene3D" id="3.30.465.10">
    <property type="match status" value="1"/>
</dbReference>
<dbReference type="Gene3D" id="3.90.78.10">
    <property type="entry name" value="UDP-N-acetylenolpyruvoylglucosamine reductase, C-terminal domain"/>
    <property type="match status" value="1"/>
</dbReference>
<dbReference type="Gene3D" id="3.30.43.10">
    <property type="entry name" value="Uridine Diphospho-n-acetylenolpyruvylglucosamine Reductase, domain 2"/>
    <property type="match status" value="1"/>
</dbReference>
<dbReference type="HAMAP" id="MF_00037">
    <property type="entry name" value="MurB"/>
    <property type="match status" value="1"/>
</dbReference>
<dbReference type="InterPro" id="IPR016166">
    <property type="entry name" value="FAD-bd_PCMH"/>
</dbReference>
<dbReference type="InterPro" id="IPR036318">
    <property type="entry name" value="FAD-bd_PCMH-like_sf"/>
</dbReference>
<dbReference type="InterPro" id="IPR016167">
    <property type="entry name" value="FAD-bd_PCMH_sub1"/>
</dbReference>
<dbReference type="InterPro" id="IPR016169">
    <property type="entry name" value="FAD-bd_PCMH_sub2"/>
</dbReference>
<dbReference type="InterPro" id="IPR003170">
    <property type="entry name" value="MurB"/>
</dbReference>
<dbReference type="InterPro" id="IPR011601">
    <property type="entry name" value="MurB_C"/>
</dbReference>
<dbReference type="InterPro" id="IPR036635">
    <property type="entry name" value="MurB_C_sf"/>
</dbReference>
<dbReference type="InterPro" id="IPR006094">
    <property type="entry name" value="Oxid_FAD_bind_N"/>
</dbReference>
<dbReference type="NCBIfam" id="TIGR00179">
    <property type="entry name" value="murB"/>
    <property type="match status" value="1"/>
</dbReference>
<dbReference type="NCBIfam" id="NF010480">
    <property type="entry name" value="PRK13905.1"/>
    <property type="match status" value="1"/>
</dbReference>
<dbReference type="PANTHER" id="PTHR21071">
    <property type="entry name" value="UDP-N-ACETYLENOLPYRUVOYLGLUCOSAMINE REDUCTASE"/>
    <property type="match status" value="1"/>
</dbReference>
<dbReference type="PANTHER" id="PTHR21071:SF4">
    <property type="entry name" value="UDP-N-ACETYLENOLPYRUVOYLGLUCOSAMINE REDUCTASE"/>
    <property type="match status" value="1"/>
</dbReference>
<dbReference type="Pfam" id="PF01565">
    <property type="entry name" value="FAD_binding_4"/>
    <property type="match status" value="1"/>
</dbReference>
<dbReference type="Pfam" id="PF02873">
    <property type="entry name" value="MurB_C"/>
    <property type="match status" value="1"/>
</dbReference>
<dbReference type="SUPFAM" id="SSF56176">
    <property type="entry name" value="FAD-binding/transporter-associated domain-like"/>
    <property type="match status" value="1"/>
</dbReference>
<dbReference type="SUPFAM" id="SSF56194">
    <property type="entry name" value="Uridine diphospho-N-Acetylenolpyruvylglucosamine reductase, MurB, C-terminal domain"/>
    <property type="match status" value="1"/>
</dbReference>
<dbReference type="PROSITE" id="PS51387">
    <property type="entry name" value="FAD_PCMH"/>
    <property type="match status" value="1"/>
</dbReference>
<accession>Q1RHX1</accession>